<feature type="chain" id="PRO_0000258294" description="Phosphopentomutase">
    <location>
        <begin position="1"/>
        <end position="409"/>
    </location>
</feature>
<feature type="binding site" evidence="1">
    <location>
        <position position="10"/>
    </location>
    <ligand>
        <name>Mn(2+)</name>
        <dbReference type="ChEBI" id="CHEBI:29035"/>
        <label>1</label>
    </ligand>
</feature>
<feature type="binding site" evidence="1">
    <location>
        <position position="302"/>
    </location>
    <ligand>
        <name>Mn(2+)</name>
        <dbReference type="ChEBI" id="CHEBI:29035"/>
        <label>2</label>
    </ligand>
</feature>
<feature type="binding site" evidence="1">
    <location>
        <position position="307"/>
    </location>
    <ligand>
        <name>Mn(2+)</name>
        <dbReference type="ChEBI" id="CHEBI:29035"/>
        <label>2</label>
    </ligand>
</feature>
<feature type="binding site" evidence="1">
    <location>
        <position position="343"/>
    </location>
    <ligand>
        <name>Mn(2+)</name>
        <dbReference type="ChEBI" id="CHEBI:29035"/>
        <label>1</label>
    </ligand>
</feature>
<feature type="binding site" evidence="1">
    <location>
        <position position="344"/>
    </location>
    <ligand>
        <name>Mn(2+)</name>
        <dbReference type="ChEBI" id="CHEBI:29035"/>
        <label>1</label>
    </ligand>
</feature>
<feature type="binding site" evidence="1">
    <location>
        <position position="355"/>
    </location>
    <ligand>
        <name>Mn(2+)</name>
        <dbReference type="ChEBI" id="CHEBI:29035"/>
        <label>2</label>
    </ligand>
</feature>
<name>DEOB_CHESB</name>
<comment type="function">
    <text evidence="1">Isomerase that catalyzes the conversion of deoxy-ribose 1-phosphate (dRib-1-P) and ribose 1-phosphate (Rib-1-P) to deoxy-ribose 5-phosphate (dRib-5-P) and ribose 5-phosphate (Rib-5-P), respectively.</text>
</comment>
<comment type="catalytic activity">
    <reaction evidence="1">
        <text>2-deoxy-alpha-D-ribose 1-phosphate = 2-deoxy-D-ribose 5-phosphate</text>
        <dbReference type="Rhea" id="RHEA:27658"/>
        <dbReference type="ChEBI" id="CHEBI:57259"/>
        <dbReference type="ChEBI" id="CHEBI:62877"/>
        <dbReference type="EC" id="5.4.2.7"/>
    </reaction>
</comment>
<comment type="catalytic activity">
    <reaction evidence="1">
        <text>alpha-D-ribose 1-phosphate = D-ribose 5-phosphate</text>
        <dbReference type="Rhea" id="RHEA:18793"/>
        <dbReference type="ChEBI" id="CHEBI:57720"/>
        <dbReference type="ChEBI" id="CHEBI:78346"/>
        <dbReference type="EC" id="5.4.2.7"/>
    </reaction>
</comment>
<comment type="cofactor">
    <cofactor evidence="1">
        <name>Mn(2+)</name>
        <dbReference type="ChEBI" id="CHEBI:29035"/>
    </cofactor>
    <text evidence="1">Binds 2 manganese ions.</text>
</comment>
<comment type="pathway">
    <text evidence="1">Carbohydrate degradation; 2-deoxy-D-ribose 1-phosphate degradation; D-glyceraldehyde 3-phosphate and acetaldehyde from 2-deoxy-alpha-D-ribose 1-phosphate: step 1/2.</text>
</comment>
<comment type="subcellular location">
    <subcellularLocation>
        <location evidence="1">Cytoplasm</location>
    </subcellularLocation>
</comment>
<comment type="similarity">
    <text evidence="1">Belongs to the phosphopentomutase family.</text>
</comment>
<gene>
    <name evidence="1" type="primary">deoB</name>
    <name type="ordered locus">Meso_4099</name>
</gene>
<dbReference type="EC" id="5.4.2.7" evidence="1"/>
<dbReference type="EMBL" id="CP000390">
    <property type="protein sequence ID" value="ABG65466.1"/>
    <property type="molecule type" value="Genomic_DNA"/>
</dbReference>
<dbReference type="SMR" id="Q11AV9"/>
<dbReference type="STRING" id="266779.Meso_4099"/>
<dbReference type="KEGG" id="mes:Meso_4099"/>
<dbReference type="eggNOG" id="COG1015">
    <property type="taxonomic scope" value="Bacteria"/>
</dbReference>
<dbReference type="HOGENOM" id="CLU_053861_0_0_5"/>
<dbReference type="OrthoDB" id="9769930at2"/>
<dbReference type="UniPathway" id="UPA00002">
    <property type="reaction ID" value="UER00467"/>
</dbReference>
<dbReference type="GO" id="GO:0005829">
    <property type="term" value="C:cytosol"/>
    <property type="evidence" value="ECO:0007669"/>
    <property type="project" value="TreeGrafter"/>
</dbReference>
<dbReference type="GO" id="GO:0000287">
    <property type="term" value="F:magnesium ion binding"/>
    <property type="evidence" value="ECO:0007669"/>
    <property type="project" value="InterPro"/>
</dbReference>
<dbReference type="GO" id="GO:0030145">
    <property type="term" value="F:manganese ion binding"/>
    <property type="evidence" value="ECO:0007669"/>
    <property type="project" value="UniProtKB-UniRule"/>
</dbReference>
<dbReference type="GO" id="GO:0008973">
    <property type="term" value="F:phosphopentomutase activity"/>
    <property type="evidence" value="ECO:0007669"/>
    <property type="project" value="UniProtKB-UniRule"/>
</dbReference>
<dbReference type="GO" id="GO:0006018">
    <property type="term" value="P:2-deoxyribose 1-phosphate catabolic process"/>
    <property type="evidence" value="ECO:0007669"/>
    <property type="project" value="UniProtKB-UniRule"/>
</dbReference>
<dbReference type="GO" id="GO:0006015">
    <property type="term" value="P:5-phosphoribose 1-diphosphate biosynthetic process"/>
    <property type="evidence" value="ECO:0007669"/>
    <property type="project" value="UniProtKB-UniPathway"/>
</dbReference>
<dbReference type="GO" id="GO:0043094">
    <property type="term" value="P:metabolic compound salvage"/>
    <property type="evidence" value="ECO:0007669"/>
    <property type="project" value="InterPro"/>
</dbReference>
<dbReference type="GO" id="GO:0009117">
    <property type="term" value="P:nucleotide metabolic process"/>
    <property type="evidence" value="ECO:0007669"/>
    <property type="project" value="InterPro"/>
</dbReference>
<dbReference type="CDD" id="cd16009">
    <property type="entry name" value="PPM"/>
    <property type="match status" value="1"/>
</dbReference>
<dbReference type="FunFam" id="3.30.70.1250:FF:000001">
    <property type="entry name" value="Phosphopentomutase"/>
    <property type="match status" value="1"/>
</dbReference>
<dbReference type="Gene3D" id="3.40.720.10">
    <property type="entry name" value="Alkaline Phosphatase, subunit A"/>
    <property type="match status" value="1"/>
</dbReference>
<dbReference type="Gene3D" id="3.30.70.1250">
    <property type="entry name" value="Phosphopentomutase"/>
    <property type="match status" value="1"/>
</dbReference>
<dbReference type="HAMAP" id="MF_00740">
    <property type="entry name" value="Phosphopentomut"/>
    <property type="match status" value="1"/>
</dbReference>
<dbReference type="InterPro" id="IPR017850">
    <property type="entry name" value="Alkaline_phosphatase_core_sf"/>
</dbReference>
<dbReference type="InterPro" id="IPR010045">
    <property type="entry name" value="DeoB"/>
</dbReference>
<dbReference type="InterPro" id="IPR006124">
    <property type="entry name" value="Metalloenzyme"/>
</dbReference>
<dbReference type="InterPro" id="IPR024052">
    <property type="entry name" value="Phosphopentomutase_DeoB_cap_sf"/>
</dbReference>
<dbReference type="NCBIfam" id="TIGR01696">
    <property type="entry name" value="deoB"/>
    <property type="match status" value="1"/>
</dbReference>
<dbReference type="NCBIfam" id="NF003766">
    <property type="entry name" value="PRK05362.1"/>
    <property type="match status" value="1"/>
</dbReference>
<dbReference type="PANTHER" id="PTHR21110">
    <property type="entry name" value="PHOSPHOPENTOMUTASE"/>
    <property type="match status" value="1"/>
</dbReference>
<dbReference type="PANTHER" id="PTHR21110:SF0">
    <property type="entry name" value="PHOSPHOPENTOMUTASE"/>
    <property type="match status" value="1"/>
</dbReference>
<dbReference type="Pfam" id="PF01676">
    <property type="entry name" value="Metalloenzyme"/>
    <property type="match status" value="1"/>
</dbReference>
<dbReference type="PIRSF" id="PIRSF001491">
    <property type="entry name" value="Ppentomutase"/>
    <property type="match status" value="1"/>
</dbReference>
<dbReference type="SUPFAM" id="SSF53649">
    <property type="entry name" value="Alkaline phosphatase-like"/>
    <property type="match status" value="1"/>
</dbReference>
<dbReference type="SUPFAM" id="SSF143856">
    <property type="entry name" value="DeoB insert domain-like"/>
    <property type="match status" value="1"/>
</dbReference>
<proteinExistence type="inferred from homology"/>
<protein>
    <recommendedName>
        <fullName evidence="1">Phosphopentomutase</fullName>
        <ecNumber evidence="1">5.4.2.7</ecNumber>
    </recommendedName>
    <alternativeName>
        <fullName evidence="1">Phosphodeoxyribomutase</fullName>
    </alternativeName>
</protein>
<evidence type="ECO:0000255" key="1">
    <source>
        <dbReference type="HAMAP-Rule" id="MF_00740"/>
    </source>
</evidence>
<organism>
    <name type="scientific">Chelativorans sp. (strain BNC1)</name>
    <dbReference type="NCBI Taxonomy" id="266779"/>
    <lineage>
        <taxon>Bacteria</taxon>
        <taxon>Pseudomonadati</taxon>
        <taxon>Pseudomonadota</taxon>
        <taxon>Alphaproteobacteria</taxon>
        <taxon>Hyphomicrobiales</taxon>
        <taxon>Phyllobacteriaceae</taxon>
        <taxon>Chelativorans</taxon>
    </lineage>
</organism>
<sequence length="409" mass="43607">MARAFLFVLDSFGIGHAPDAARFGDEGANTFGHIAGACAAGRADRAGLRTGPLDLPHMQSLGLNAAAAIAAGREPERGFASTGFFGAAEERSTGKDTPSGHWEIAGVPVPFEWGYFPETTPSFPAELTGRLIREASLPGILANCHASGTEVIARLGEEHIRTGKPICYTSADSVFQIAAHETHFGLDRLYAVCETARRLVDDYRIGRVIARPFVGESAETFERTANRRDYAVPPPEPTLLDRVEAAGRRVIGIGKIGDIFAHQGVTEVRKAAGNMALFDAALGAMDDAREGDLVFANFVDFDSLYGHRRDVAGYAAALEAFDRRLPEALGKLRAGDLLILTADHGCDPTWRGTDHTRECVPILGAGPGLAKGSIGRRRSYADIGETIASHLALPAGRHGVSFLNALQHA</sequence>
<reference key="1">
    <citation type="submission" date="2006-06" db="EMBL/GenBank/DDBJ databases">
        <title>Complete sequence of chromosome of Mesorhizobium sp. BNC1.</title>
        <authorList>
            <consortium name="US DOE Joint Genome Institute"/>
            <person name="Copeland A."/>
            <person name="Lucas S."/>
            <person name="Lapidus A."/>
            <person name="Barry K."/>
            <person name="Detter J.C."/>
            <person name="Glavina del Rio T."/>
            <person name="Hammon N."/>
            <person name="Israni S."/>
            <person name="Dalin E."/>
            <person name="Tice H."/>
            <person name="Pitluck S."/>
            <person name="Chertkov O."/>
            <person name="Brettin T."/>
            <person name="Bruce D."/>
            <person name="Han C."/>
            <person name="Tapia R."/>
            <person name="Gilna P."/>
            <person name="Schmutz J."/>
            <person name="Larimer F."/>
            <person name="Land M."/>
            <person name="Hauser L."/>
            <person name="Kyrpides N."/>
            <person name="Mikhailova N."/>
            <person name="Richardson P."/>
        </authorList>
    </citation>
    <scope>NUCLEOTIDE SEQUENCE [LARGE SCALE GENOMIC DNA]</scope>
    <source>
        <strain>BNC1</strain>
    </source>
</reference>
<accession>Q11AV9</accession>
<keyword id="KW-0963">Cytoplasm</keyword>
<keyword id="KW-0413">Isomerase</keyword>
<keyword id="KW-0464">Manganese</keyword>
<keyword id="KW-0479">Metal-binding</keyword>